<evidence type="ECO:0000255" key="1">
    <source>
        <dbReference type="HAMAP-Rule" id="MF_01454"/>
    </source>
</evidence>
<evidence type="ECO:0000255" key="2">
    <source>
        <dbReference type="PROSITE-ProRule" id="PRU01231"/>
    </source>
</evidence>
<feature type="chain" id="PRO_0000386018" description="GTPase Obg">
    <location>
        <begin position="1"/>
        <end position="356"/>
    </location>
</feature>
<feature type="domain" description="Obg" evidence="2">
    <location>
        <begin position="2"/>
        <end position="160"/>
    </location>
</feature>
<feature type="domain" description="OBG-type G" evidence="1">
    <location>
        <begin position="161"/>
        <end position="329"/>
    </location>
</feature>
<feature type="binding site" evidence="1">
    <location>
        <begin position="167"/>
        <end position="174"/>
    </location>
    <ligand>
        <name>GTP</name>
        <dbReference type="ChEBI" id="CHEBI:37565"/>
    </ligand>
</feature>
<feature type="binding site" evidence="1">
    <location>
        <position position="174"/>
    </location>
    <ligand>
        <name>Mg(2+)</name>
        <dbReference type="ChEBI" id="CHEBI:18420"/>
    </ligand>
</feature>
<feature type="binding site" evidence="1">
    <location>
        <begin position="192"/>
        <end position="196"/>
    </location>
    <ligand>
        <name>GTP</name>
        <dbReference type="ChEBI" id="CHEBI:37565"/>
    </ligand>
</feature>
<feature type="binding site" evidence="1">
    <location>
        <position position="194"/>
    </location>
    <ligand>
        <name>Mg(2+)</name>
        <dbReference type="ChEBI" id="CHEBI:18420"/>
    </ligand>
</feature>
<feature type="binding site" evidence="1">
    <location>
        <begin position="215"/>
        <end position="218"/>
    </location>
    <ligand>
        <name>GTP</name>
        <dbReference type="ChEBI" id="CHEBI:37565"/>
    </ligand>
</feature>
<feature type="binding site" evidence="1">
    <location>
        <begin position="282"/>
        <end position="285"/>
    </location>
    <ligand>
        <name>GTP</name>
        <dbReference type="ChEBI" id="CHEBI:37565"/>
    </ligand>
</feature>
<feature type="binding site" evidence="1">
    <location>
        <begin position="310"/>
        <end position="312"/>
    </location>
    <ligand>
        <name>GTP</name>
        <dbReference type="ChEBI" id="CHEBI:37565"/>
    </ligand>
</feature>
<sequence>MESFVDEVAIEVFAGHGGAGSVHFRREKYVEFGGPDGGDGGIGGNVVIRPNLSMYTLDKYLSKRKFKAQAGFPGVGDNCSGKKGEDLVLFVPLGTQIYDEETGDLLFDFVSDSQEFVVARGGRGGKGNAHFKTSTNQTPRFAQPGEEGEYKFLRLSLKLLADVGIVGLPNAGKSTLISKITDAHPKIAGYAFTTLSPNLGVVKRRGDIFRFTIADIPGIIEGASMGIGLGLSFLRHIERVKGILYLFDASSLDIEEDLKMLRNELSTYNPELLNRPYLIVLNKIDIWNDPEFTKDVIAKVSHLGKVVAISADQEVNLEELLENMDEVFFKNEIEKILNPIKDTKPISLDESDIFES</sequence>
<reference key="1">
    <citation type="journal article" date="2004" name="J. Bacteriol.">
        <title>Comparative genomics of two Leptospira interrogans serovars reveals novel insights into physiology and pathogenesis.</title>
        <authorList>
            <person name="Nascimento A.L.T.O."/>
            <person name="Ko A.I."/>
            <person name="Martins E.A.L."/>
            <person name="Monteiro-Vitorello C.B."/>
            <person name="Ho P.L."/>
            <person name="Haake D.A."/>
            <person name="Verjovski-Almeida S."/>
            <person name="Hartskeerl R.A."/>
            <person name="Marques M.V."/>
            <person name="Oliveira M.C."/>
            <person name="Menck C.F.M."/>
            <person name="Leite L.C.C."/>
            <person name="Carrer H."/>
            <person name="Coutinho L.L."/>
            <person name="Degrave W.M."/>
            <person name="Dellagostin O.A."/>
            <person name="El-Dorry H."/>
            <person name="Ferro E.S."/>
            <person name="Ferro M.I.T."/>
            <person name="Furlan L.R."/>
            <person name="Gamberini M."/>
            <person name="Giglioti E.A."/>
            <person name="Goes-Neto A."/>
            <person name="Goldman G.H."/>
            <person name="Goldman M.H.S."/>
            <person name="Harakava R."/>
            <person name="Jeronimo S.M.B."/>
            <person name="Junqueira-de-Azevedo I.L.M."/>
            <person name="Kimura E.T."/>
            <person name="Kuramae E.E."/>
            <person name="Lemos E.G.M."/>
            <person name="Lemos M.V.F."/>
            <person name="Marino C.L."/>
            <person name="Nunes L.R."/>
            <person name="de Oliveira R.C."/>
            <person name="Pereira G.G."/>
            <person name="Reis M.S."/>
            <person name="Schriefer A."/>
            <person name="Siqueira W.J."/>
            <person name="Sommer P."/>
            <person name="Tsai S.M."/>
            <person name="Simpson A.J.G."/>
            <person name="Ferro J.A."/>
            <person name="Camargo L.E.A."/>
            <person name="Kitajima J.P."/>
            <person name="Setubal J.C."/>
            <person name="Van Sluys M.A."/>
        </authorList>
    </citation>
    <scope>NUCLEOTIDE SEQUENCE [LARGE SCALE GENOMIC DNA]</scope>
    <source>
        <strain>Fiocruz L1-130</strain>
    </source>
</reference>
<protein>
    <recommendedName>
        <fullName evidence="1">GTPase Obg</fullName>
        <ecNumber evidence="1">3.6.5.-</ecNumber>
    </recommendedName>
    <alternativeName>
        <fullName evidence="1">GTP-binding protein Obg</fullName>
    </alternativeName>
</protein>
<proteinExistence type="inferred from homology"/>
<accession>Q72NQ7</accession>
<dbReference type="EC" id="3.6.5.-" evidence="1"/>
<dbReference type="EMBL" id="AE016823">
    <property type="protein sequence ID" value="AAS71329.1"/>
    <property type="molecule type" value="Genomic_DNA"/>
</dbReference>
<dbReference type="SMR" id="Q72NQ7"/>
<dbReference type="KEGG" id="lic:LIC_12773"/>
<dbReference type="HOGENOM" id="CLU_011747_2_0_12"/>
<dbReference type="Proteomes" id="UP000007037">
    <property type="component" value="Chromosome I"/>
</dbReference>
<dbReference type="GO" id="GO:0005737">
    <property type="term" value="C:cytoplasm"/>
    <property type="evidence" value="ECO:0007669"/>
    <property type="project" value="UniProtKB-SubCell"/>
</dbReference>
<dbReference type="GO" id="GO:0005525">
    <property type="term" value="F:GTP binding"/>
    <property type="evidence" value="ECO:0007669"/>
    <property type="project" value="UniProtKB-UniRule"/>
</dbReference>
<dbReference type="GO" id="GO:0003924">
    <property type="term" value="F:GTPase activity"/>
    <property type="evidence" value="ECO:0007669"/>
    <property type="project" value="UniProtKB-UniRule"/>
</dbReference>
<dbReference type="GO" id="GO:0000287">
    <property type="term" value="F:magnesium ion binding"/>
    <property type="evidence" value="ECO:0007669"/>
    <property type="project" value="InterPro"/>
</dbReference>
<dbReference type="GO" id="GO:0042254">
    <property type="term" value="P:ribosome biogenesis"/>
    <property type="evidence" value="ECO:0007669"/>
    <property type="project" value="UniProtKB-UniRule"/>
</dbReference>
<dbReference type="CDD" id="cd01898">
    <property type="entry name" value="Obg"/>
    <property type="match status" value="1"/>
</dbReference>
<dbReference type="FunFam" id="2.70.210.12:FF:000001">
    <property type="entry name" value="GTPase Obg"/>
    <property type="match status" value="1"/>
</dbReference>
<dbReference type="Gene3D" id="2.70.210.12">
    <property type="entry name" value="GTP1/OBG domain"/>
    <property type="match status" value="1"/>
</dbReference>
<dbReference type="Gene3D" id="3.40.50.300">
    <property type="entry name" value="P-loop containing nucleotide triphosphate hydrolases"/>
    <property type="match status" value="1"/>
</dbReference>
<dbReference type="HAMAP" id="MF_01454">
    <property type="entry name" value="GTPase_Obg"/>
    <property type="match status" value="1"/>
</dbReference>
<dbReference type="InterPro" id="IPR031167">
    <property type="entry name" value="G_OBG"/>
</dbReference>
<dbReference type="InterPro" id="IPR006073">
    <property type="entry name" value="GTP-bd"/>
</dbReference>
<dbReference type="InterPro" id="IPR014100">
    <property type="entry name" value="GTP-bd_Obg/CgtA"/>
</dbReference>
<dbReference type="InterPro" id="IPR006074">
    <property type="entry name" value="GTP1-OBG_CS"/>
</dbReference>
<dbReference type="InterPro" id="IPR006169">
    <property type="entry name" value="GTP1_OBG_dom"/>
</dbReference>
<dbReference type="InterPro" id="IPR036726">
    <property type="entry name" value="GTP1_OBG_dom_sf"/>
</dbReference>
<dbReference type="InterPro" id="IPR045086">
    <property type="entry name" value="OBG_GTPase"/>
</dbReference>
<dbReference type="InterPro" id="IPR027417">
    <property type="entry name" value="P-loop_NTPase"/>
</dbReference>
<dbReference type="InterPro" id="IPR005225">
    <property type="entry name" value="Small_GTP-bd"/>
</dbReference>
<dbReference type="NCBIfam" id="TIGR02729">
    <property type="entry name" value="Obg_CgtA"/>
    <property type="match status" value="1"/>
</dbReference>
<dbReference type="NCBIfam" id="NF008955">
    <property type="entry name" value="PRK12297.1"/>
    <property type="match status" value="1"/>
</dbReference>
<dbReference type="NCBIfam" id="NF008956">
    <property type="entry name" value="PRK12299.1"/>
    <property type="match status" value="1"/>
</dbReference>
<dbReference type="NCBIfam" id="TIGR00231">
    <property type="entry name" value="small_GTP"/>
    <property type="match status" value="1"/>
</dbReference>
<dbReference type="PANTHER" id="PTHR11702">
    <property type="entry name" value="DEVELOPMENTALLY REGULATED GTP-BINDING PROTEIN-RELATED"/>
    <property type="match status" value="1"/>
</dbReference>
<dbReference type="PANTHER" id="PTHR11702:SF31">
    <property type="entry name" value="MITOCHONDRIAL RIBOSOME-ASSOCIATED GTPASE 2"/>
    <property type="match status" value="1"/>
</dbReference>
<dbReference type="Pfam" id="PF01018">
    <property type="entry name" value="GTP1_OBG"/>
    <property type="match status" value="1"/>
</dbReference>
<dbReference type="Pfam" id="PF01926">
    <property type="entry name" value="MMR_HSR1"/>
    <property type="match status" value="1"/>
</dbReference>
<dbReference type="PIRSF" id="PIRSF002401">
    <property type="entry name" value="GTP_bd_Obg/CgtA"/>
    <property type="match status" value="1"/>
</dbReference>
<dbReference type="PRINTS" id="PR00326">
    <property type="entry name" value="GTP1OBG"/>
</dbReference>
<dbReference type="SUPFAM" id="SSF82051">
    <property type="entry name" value="Obg GTP-binding protein N-terminal domain"/>
    <property type="match status" value="1"/>
</dbReference>
<dbReference type="SUPFAM" id="SSF52540">
    <property type="entry name" value="P-loop containing nucleoside triphosphate hydrolases"/>
    <property type="match status" value="1"/>
</dbReference>
<dbReference type="PROSITE" id="PS51710">
    <property type="entry name" value="G_OBG"/>
    <property type="match status" value="1"/>
</dbReference>
<dbReference type="PROSITE" id="PS00905">
    <property type="entry name" value="GTP1_OBG"/>
    <property type="match status" value="1"/>
</dbReference>
<dbReference type="PROSITE" id="PS51883">
    <property type="entry name" value="OBG"/>
    <property type="match status" value="1"/>
</dbReference>
<keyword id="KW-0963">Cytoplasm</keyword>
<keyword id="KW-0342">GTP-binding</keyword>
<keyword id="KW-0378">Hydrolase</keyword>
<keyword id="KW-0460">Magnesium</keyword>
<keyword id="KW-0479">Metal-binding</keyword>
<keyword id="KW-0547">Nucleotide-binding</keyword>
<organism>
    <name type="scientific">Leptospira interrogans serogroup Icterohaemorrhagiae serovar copenhageni (strain Fiocruz L1-130)</name>
    <dbReference type="NCBI Taxonomy" id="267671"/>
    <lineage>
        <taxon>Bacteria</taxon>
        <taxon>Pseudomonadati</taxon>
        <taxon>Spirochaetota</taxon>
        <taxon>Spirochaetia</taxon>
        <taxon>Leptospirales</taxon>
        <taxon>Leptospiraceae</taxon>
        <taxon>Leptospira</taxon>
    </lineage>
</organism>
<name>OBG_LEPIC</name>
<gene>
    <name evidence="1" type="primary">obg</name>
    <name type="ordered locus">LIC_12773</name>
</gene>
<comment type="function">
    <text evidence="1">An essential GTPase which binds GTP, GDP and possibly (p)ppGpp with moderate affinity, with high nucleotide exchange rates and a fairly low GTP hydrolysis rate. Plays a role in control of the cell cycle, stress response, ribosome biogenesis and in those bacteria that undergo differentiation, in morphogenesis control.</text>
</comment>
<comment type="cofactor">
    <cofactor evidence="1">
        <name>Mg(2+)</name>
        <dbReference type="ChEBI" id="CHEBI:18420"/>
    </cofactor>
</comment>
<comment type="subunit">
    <text evidence="1">Monomer.</text>
</comment>
<comment type="subcellular location">
    <subcellularLocation>
        <location evidence="1">Cytoplasm</location>
    </subcellularLocation>
</comment>
<comment type="similarity">
    <text evidence="1">Belongs to the TRAFAC class OBG-HflX-like GTPase superfamily. OBG GTPase family.</text>
</comment>